<keyword id="KW-0067">ATP-binding</keyword>
<keyword id="KW-0143">Chaperone</keyword>
<keyword id="KW-0150">Chloroplast</keyword>
<keyword id="KW-0547">Nucleotide-binding</keyword>
<keyword id="KW-0934">Plastid</keyword>
<comment type="function">
    <text evidence="1">Acts as a chaperone.</text>
</comment>
<comment type="subcellular location">
    <subcellularLocation>
        <location>Plastid</location>
        <location>Chloroplast</location>
    </subcellularLocation>
</comment>
<comment type="similarity">
    <text evidence="1">Belongs to the heat shock protein 70 family.</text>
</comment>
<feature type="chain" id="PRO_0000275348" description="Chaperone protein dnaK">
    <location>
        <begin position="1"/>
        <end position="623"/>
    </location>
</feature>
<feature type="region of interest" description="Disordered" evidence="2">
    <location>
        <begin position="598"/>
        <end position="623"/>
    </location>
</feature>
<organism>
    <name type="scientific">Emiliania huxleyi</name>
    <name type="common">Coccolithophore</name>
    <name type="synonym">Pontosphaera huxleyi</name>
    <dbReference type="NCBI Taxonomy" id="2903"/>
    <lineage>
        <taxon>Eukaryota</taxon>
        <taxon>Haptista</taxon>
        <taxon>Haptophyta</taxon>
        <taxon>Prymnesiophyceae</taxon>
        <taxon>Isochrysidales</taxon>
        <taxon>Noelaerhabdaceae</taxon>
        <taxon>Emiliania</taxon>
    </lineage>
</organism>
<reference key="1">
    <citation type="journal article" date="2005" name="DNA Res.">
        <title>The complete plastid genome sequence of the haptophyte Emiliania huxleyi: a comparison to other plastid genomes.</title>
        <authorList>
            <person name="Sanchez-Puerta M.V."/>
            <person name="Bachvaroff T.R."/>
            <person name="Delwiche C.F."/>
        </authorList>
    </citation>
    <scope>NUCLEOTIDE SEQUENCE [LARGE SCALE GENOMIC DNA]</scope>
    <source>
        <strain>CCMP373 / CSIRO-CS-57 / BT6</strain>
    </source>
</reference>
<proteinExistence type="inferred from homology"/>
<geneLocation type="chloroplast"/>
<evidence type="ECO:0000255" key="1">
    <source>
        <dbReference type="HAMAP-Rule" id="MF_00332"/>
    </source>
</evidence>
<evidence type="ECO:0000256" key="2">
    <source>
        <dbReference type="SAM" id="MobiDB-lite"/>
    </source>
</evidence>
<protein>
    <recommendedName>
        <fullName>Chaperone protein dnaK</fullName>
    </recommendedName>
    <alternativeName>
        <fullName evidence="1">HSP70</fullName>
    </alternativeName>
    <alternativeName>
        <fullName evidence="1">Heat shock 70 kDa protein</fullName>
    </alternativeName>
    <alternativeName>
        <fullName evidence="1">Heat shock protein 70</fullName>
    </alternativeName>
</protein>
<gene>
    <name evidence="1" type="primary">dnaK</name>
</gene>
<sequence>MGKVVGIDLGTTNSVVAVMEGGKPTVITNSEGQRTTPSVVAYTKKGDLLVGQIAKRQAVINPENTFYSVKRFIGRKTSEVTEALRQVPYKVLQTEDIIKLDCPALGKQFASEEISAQVLRKLADDATKYLGETVTQAVITVPAYFNDSQRQATKDAGKIAGLEVLRIINEPTAASLSYGLDKKDNETILVFDLGGGTFDVSILEVGDGVFEVLATSGDTRLGGDDFDEKIVQWLVNEFKNDEGIDLTQDNQALQRLTEAAEKAKVELSTLTQSSINLPFISVTPEGPKHLEKDLTRAKFEELCSDLIDRCKTPIQNALKDAELSPSSIDQNVLVGGSTRIPAVQELVEQLLGKKPNQSVNPDEVVAVGAAVQAGVLGGEVKDILLLDVTPLSLGVETLGGITTKITPRNTIIPTKKSETFSTAVDNQPNVEIHVLQGERELAKDNKSLGTFRLDGIAPAARGVPQIEVTFDIDANGILSVTAKDKATNKQQSITISGASNLAKDEVERMVEEAEQNAASDKEKSEQIDVKNKADSLCYQTKKQLEELSSKLEAADKEKVEEVLTKLELAVQNDDLEGMKTLSEELQKNMMEVGQKVYTPDAGAEGGAAPSQDDAIETDFSTEK</sequence>
<dbReference type="EMBL" id="AY741371">
    <property type="protein sequence ID" value="AAX13900.1"/>
    <property type="molecule type" value="Genomic_DNA"/>
</dbReference>
<dbReference type="RefSeq" id="YP_277401.1">
    <property type="nucleotide sequence ID" value="NC_007288.1"/>
</dbReference>
<dbReference type="SMR" id="Q4G366"/>
<dbReference type="STRING" id="2903.Q4G366"/>
<dbReference type="GeneID" id="3562486"/>
<dbReference type="GO" id="GO:0009507">
    <property type="term" value="C:chloroplast"/>
    <property type="evidence" value="ECO:0007669"/>
    <property type="project" value="UniProtKB-SubCell"/>
</dbReference>
<dbReference type="GO" id="GO:0005524">
    <property type="term" value="F:ATP binding"/>
    <property type="evidence" value="ECO:0007669"/>
    <property type="project" value="UniProtKB-UniRule"/>
</dbReference>
<dbReference type="GO" id="GO:0140662">
    <property type="term" value="F:ATP-dependent protein folding chaperone"/>
    <property type="evidence" value="ECO:0007669"/>
    <property type="project" value="InterPro"/>
</dbReference>
<dbReference type="GO" id="GO:0051082">
    <property type="term" value="F:unfolded protein binding"/>
    <property type="evidence" value="ECO:0007669"/>
    <property type="project" value="InterPro"/>
</dbReference>
<dbReference type="CDD" id="cd10234">
    <property type="entry name" value="ASKHA_NBD_HSP70_DnaK-like"/>
    <property type="match status" value="1"/>
</dbReference>
<dbReference type="FunFam" id="2.60.34.10:FF:000014">
    <property type="entry name" value="Chaperone protein DnaK HSP70"/>
    <property type="match status" value="1"/>
</dbReference>
<dbReference type="FunFam" id="1.20.1270.10:FF:000001">
    <property type="entry name" value="Molecular chaperone DnaK"/>
    <property type="match status" value="1"/>
</dbReference>
<dbReference type="FunFam" id="3.30.420.40:FF:000004">
    <property type="entry name" value="Molecular chaperone DnaK"/>
    <property type="match status" value="1"/>
</dbReference>
<dbReference type="FunFam" id="3.90.640.10:FF:000003">
    <property type="entry name" value="Molecular chaperone DnaK"/>
    <property type="match status" value="1"/>
</dbReference>
<dbReference type="Gene3D" id="1.20.1270.10">
    <property type="match status" value="1"/>
</dbReference>
<dbReference type="Gene3D" id="3.30.420.40">
    <property type="match status" value="2"/>
</dbReference>
<dbReference type="Gene3D" id="3.90.640.10">
    <property type="entry name" value="Actin, Chain A, domain 4"/>
    <property type="match status" value="1"/>
</dbReference>
<dbReference type="Gene3D" id="2.60.34.10">
    <property type="entry name" value="Substrate Binding Domain Of DNAk, Chain A, domain 1"/>
    <property type="match status" value="1"/>
</dbReference>
<dbReference type="HAMAP" id="MF_00332">
    <property type="entry name" value="DnaK"/>
    <property type="match status" value="1"/>
</dbReference>
<dbReference type="InterPro" id="IPR043129">
    <property type="entry name" value="ATPase_NBD"/>
</dbReference>
<dbReference type="InterPro" id="IPR012725">
    <property type="entry name" value="Chaperone_DnaK"/>
</dbReference>
<dbReference type="InterPro" id="IPR018181">
    <property type="entry name" value="Heat_shock_70_CS"/>
</dbReference>
<dbReference type="InterPro" id="IPR029048">
    <property type="entry name" value="HSP70_C_sf"/>
</dbReference>
<dbReference type="InterPro" id="IPR029047">
    <property type="entry name" value="HSP70_peptide-bd_sf"/>
</dbReference>
<dbReference type="InterPro" id="IPR013126">
    <property type="entry name" value="Hsp_70_fam"/>
</dbReference>
<dbReference type="NCBIfam" id="NF001413">
    <property type="entry name" value="PRK00290.1"/>
    <property type="match status" value="1"/>
</dbReference>
<dbReference type="NCBIfam" id="TIGR02350">
    <property type="entry name" value="prok_dnaK"/>
    <property type="match status" value="1"/>
</dbReference>
<dbReference type="PANTHER" id="PTHR19375">
    <property type="entry name" value="HEAT SHOCK PROTEIN 70KDA"/>
    <property type="match status" value="1"/>
</dbReference>
<dbReference type="Pfam" id="PF00012">
    <property type="entry name" value="HSP70"/>
    <property type="match status" value="1"/>
</dbReference>
<dbReference type="PRINTS" id="PR00301">
    <property type="entry name" value="HEATSHOCK70"/>
</dbReference>
<dbReference type="SUPFAM" id="SSF53067">
    <property type="entry name" value="Actin-like ATPase domain"/>
    <property type="match status" value="2"/>
</dbReference>
<dbReference type="SUPFAM" id="SSF100934">
    <property type="entry name" value="Heat shock protein 70kD (HSP70), C-terminal subdomain"/>
    <property type="match status" value="1"/>
</dbReference>
<dbReference type="SUPFAM" id="SSF100920">
    <property type="entry name" value="Heat shock protein 70kD (HSP70), peptide-binding domain"/>
    <property type="match status" value="1"/>
</dbReference>
<dbReference type="PROSITE" id="PS00297">
    <property type="entry name" value="HSP70_1"/>
    <property type="match status" value="1"/>
</dbReference>
<dbReference type="PROSITE" id="PS00329">
    <property type="entry name" value="HSP70_2"/>
    <property type="match status" value="1"/>
</dbReference>
<name>DNAK_EMIHU</name>
<accession>Q4G366</accession>